<sequence length="950" mass="105996">MMQQYQSNSYLFGGNAPYVEELYEAYLQNPASVPDNWRAYFDAMQNVPAVDGSNGRDIPHAPIVASFAERAKQGPIRTIVASADSDMGRKRVAATQLIAAYRNIGSHWADLDPLKRQERPPLPDLDPAFYGFSEADLDIVFNASNTYFGKESMSLRELLNNLRETYCGTIGFEFMYVSDQAQKRWWQERLETTRSKPVFTLEKKKHILDRLTAAEGLERFLHTKYVGQKRFSLEGGESFIAAMDELIQHAGSKGVQEIVIGMAHRGRLNVLVNTLGKMPADLFAEFEGKHVDDLPAGDVKYHKGFSSDVSTEGGPVHLSLAFNPSHLEIVNPVVEGSAKARQERRGEVGHKEVLPVQVHGDAAFAGQGVVMETLNLAQTRGYGTGGSMHIVINNQIGFTTSDPRDARSTLYCTDVVKMIEAPVLHVNGDDPEAVVYAMQLAVDFRMEFKKDVVVDIICFRKLGHNEQDTPAVTQPLMYKKIAQHPGTRKLYADKLAAQNLVPAEFGDEKVKAYRAAMDAGKHTADPVLSNFKNKFAVDWMPFLNRKWTDAADTAVPVTELKRLAERITTTPETLKLHPLVEKVVKDRANMGRGDQPLDWGMGEHLAFASLVSSGYPVRITGQDAGRGTFTHRHAVLHDQARERWDAGSYVPLQNVSENQAPFTVIDSVLSEEAVLGFEYGYSAAEPNALVIWEAQFGDFVNGAQVVIDQFISSGEVKWGRASGLTLMLPHGYEGQGPEHSSARIERFLQLCADHNMQVCQPTTPAQIFHLLRRQMIRLFRKPLVIMTPKSLLRNKDAVSPLSDLAKGHFETVIPDHEELNASKVKRVIMCSGKVYYDLVNTRKEREANDTAVIRLEQLYPFPHKAVAAELKKYPNATEIVWCQDEPQNQGAWFFVQHYIMENMTDGQKLGYAGRPASASPAVGYYAKHNEQQKALLEAAFAKLKGFVLTK</sequence>
<organism>
    <name type="scientific">Cupriavidus necator (strain ATCC 17699 / DSM 428 / KCTC 22496 / NCIMB 10442 / H16 / Stanier 337)</name>
    <name type="common">Ralstonia eutropha</name>
    <dbReference type="NCBI Taxonomy" id="381666"/>
    <lineage>
        <taxon>Bacteria</taxon>
        <taxon>Pseudomonadati</taxon>
        <taxon>Pseudomonadota</taxon>
        <taxon>Betaproteobacteria</taxon>
        <taxon>Burkholderiales</taxon>
        <taxon>Burkholderiaceae</taxon>
        <taxon>Cupriavidus</taxon>
    </lineage>
</organism>
<name>ODO1_CUPNH</name>
<keyword id="KW-0324">Glycolysis</keyword>
<keyword id="KW-0560">Oxidoreductase</keyword>
<keyword id="KW-1185">Reference proteome</keyword>
<keyword id="KW-0786">Thiamine pyrophosphate</keyword>
<proteinExistence type="inferred from homology"/>
<gene>
    <name type="primary">odhA</name>
    <name type="ordered locus">H16_A2325</name>
</gene>
<accession>Q59106</accession>
<accession>Q0K9A0</accession>
<feature type="chain" id="PRO_0000162160" description="2-oxoglutarate dehydrogenase E1 component">
    <location>
        <begin position="1"/>
        <end position="950"/>
    </location>
</feature>
<feature type="sequence conflict" description="In Ref. 1; CAA62980." evidence="2" ref="1">
    <original>G</original>
    <variation>A</variation>
    <location>
        <position position="621"/>
    </location>
</feature>
<protein>
    <recommendedName>
        <fullName>2-oxoglutarate dehydrogenase E1 component</fullName>
        <ecNumber evidence="1">1.2.4.2</ecNumber>
    </recommendedName>
    <alternativeName>
        <fullName>Alpha-ketoglutarate dehydrogenase</fullName>
    </alternativeName>
</protein>
<comment type="function">
    <text evidence="1">E1 component of the 2-oxoglutarate dehydrogenase (OGDH) complex which catalyzes the decarboxylation of 2-oxoglutarate, the first step in the conversion of 2-oxoglutarate to succinyl-CoA and CO(2).</text>
</comment>
<comment type="catalytic activity">
    <reaction evidence="1">
        <text>N(6)-[(R)-lipoyl]-L-lysyl-[protein] + 2-oxoglutarate + H(+) = N(6)-[(R)-S(8)-succinyldihydrolipoyl]-L-lysyl-[protein] + CO2</text>
        <dbReference type="Rhea" id="RHEA:12188"/>
        <dbReference type="Rhea" id="RHEA-COMP:10474"/>
        <dbReference type="Rhea" id="RHEA-COMP:20092"/>
        <dbReference type="ChEBI" id="CHEBI:15378"/>
        <dbReference type="ChEBI" id="CHEBI:16526"/>
        <dbReference type="ChEBI" id="CHEBI:16810"/>
        <dbReference type="ChEBI" id="CHEBI:83099"/>
        <dbReference type="ChEBI" id="CHEBI:83120"/>
        <dbReference type="EC" id="1.2.4.2"/>
    </reaction>
</comment>
<comment type="cofactor">
    <cofactor evidence="1">
        <name>thiamine diphosphate</name>
        <dbReference type="ChEBI" id="CHEBI:58937"/>
    </cofactor>
</comment>
<comment type="subunit">
    <text evidence="1">Homodimer. Part of the 2-oxoglutarate dehydrogenase (OGDH) complex composed of E1 (2-oxoglutarate dehydrogenase), E2 (dihydrolipoamide succinyltransferase) and E3 (dihydrolipoamide dehydrogenase); the complex contains multiple copies of the three enzymatic components (E1, E2 and E3).</text>
</comment>
<comment type="similarity">
    <text evidence="2">Belongs to the alpha-ketoglutarate dehydrogenase family.</text>
</comment>
<evidence type="ECO:0000250" key="1">
    <source>
        <dbReference type="UniProtKB" id="P0AFG3"/>
    </source>
</evidence>
<evidence type="ECO:0000305" key="2"/>
<reference key="1">
    <citation type="journal article" date="1996" name="FEMS Microbiol. Lett.">
        <title>Cloning and characterization of the Alcaligenes eutrophus 2-oxoglutarate dehydrogenase complex.</title>
        <authorList>
            <person name="Hein S."/>
            <person name="Steinbuechel A."/>
        </authorList>
    </citation>
    <scope>NUCLEOTIDE SEQUENCE [GENOMIC DNA]</scope>
</reference>
<reference key="2">
    <citation type="journal article" date="2006" name="Nat. Biotechnol.">
        <title>Genome sequence of the bioplastic-producing 'Knallgas' bacterium Ralstonia eutropha H16.</title>
        <authorList>
            <person name="Pohlmann A."/>
            <person name="Fricke W.F."/>
            <person name="Reinecke F."/>
            <person name="Kusian B."/>
            <person name="Liesegang H."/>
            <person name="Cramm R."/>
            <person name="Eitinger T."/>
            <person name="Ewering C."/>
            <person name="Poetter M."/>
            <person name="Schwartz E."/>
            <person name="Strittmatter A."/>
            <person name="Voss I."/>
            <person name="Gottschalk G."/>
            <person name="Steinbuechel A."/>
            <person name="Friedrich B."/>
            <person name="Bowien B."/>
        </authorList>
    </citation>
    <scope>NUCLEOTIDE SEQUENCE [LARGE SCALE GENOMIC DNA]</scope>
    <source>
        <strain>ATCC 17699 / DSM 428 / KCTC 22496 / NCIMB 10442 / H16 / Stanier 337</strain>
    </source>
</reference>
<dbReference type="EC" id="1.2.4.2" evidence="1"/>
<dbReference type="EMBL" id="X91877">
    <property type="protein sequence ID" value="CAA62980.1"/>
    <property type="molecule type" value="Genomic_DNA"/>
</dbReference>
<dbReference type="EMBL" id="AM260479">
    <property type="protein sequence ID" value="CAJ93421.1"/>
    <property type="molecule type" value="Genomic_DNA"/>
</dbReference>
<dbReference type="PIR" id="T44422">
    <property type="entry name" value="T44422"/>
</dbReference>
<dbReference type="RefSeq" id="WP_010809464.1">
    <property type="nucleotide sequence ID" value="NZ_CP039287.1"/>
</dbReference>
<dbReference type="SMR" id="Q59106"/>
<dbReference type="STRING" id="381666.H16_A2325"/>
<dbReference type="KEGG" id="reh:H16_A2325"/>
<dbReference type="eggNOG" id="COG0567">
    <property type="taxonomic scope" value="Bacteria"/>
</dbReference>
<dbReference type="HOGENOM" id="CLU_004709_1_0_4"/>
<dbReference type="OrthoDB" id="9759785at2"/>
<dbReference type="Proteomes" id="UP000008210">
    <property type="component" value="Chromosome 1"/>
</dbReference>
<dbReference type="GO" id="GO:0005829">
    <property type="term" value="C:cytosol"/>
    <property type="evidence" value="ECO:0007669"/>
    <property type="project" value="TreeGrafter"/>
</dbReference>
<dbReference type="GO" id="GO:0045252">
    <property type="term" value="C:oxoglutarate dehydrogenase complex"/>
    <property type="evidence" value="ECO:0007669"/>
    <property type="project" value="TreeGrafter"/>
</dbReference>
<dbReference type="GO" id="GO:0004591">
    <property type="term" value="F:oxoglutarate dehydrogenase (succinyl-transferring) activity"/>
    <property type="evidence" value="ECO:0007669"/>
    <property type="project" value="UniProtKB-EC"/>
</dbReference>
<dbReference type="GO" id="GO:0030976">
    <property type="term" value="F:thiamine pyrophosphate binding"/>
    <property type="evidence" value="ECO:0007669"/>
    <property type="project" value="InterPro"/>
</dbReference>
<dbReference type="GO" id="GO:0006096">
    <property type="term" value="P:glycolytic process"/>
    <property type="evidence" value="ECO:0007669"/>
    <property type="project" value="UniProtKB-KW"/>
</dbReference>
<dbReference type="GO" id="GO:0006099">
    <property type="term" value="P:tricarboxylic acid cycle"/>
    <property type="evidence" value="ECO:0007669"/>
    <property type="project" value="TreeGrafter"/>
</dbReference>
<dbReference type="CDD" id="cd02016">
    <property type="entry name" value="TPP_E1_OGDC_like"/>
    <property type="match status" value="1"/>
</dbReference>
<dbReference type="FunFam" id="1.10.287.1150:FF:000004">
    <property type="entry name" value="2-oxoglutarate dehydrogenase E1 component"/>
    <property type="match status" value="1"/>
</dbReference>
<dbReference type="FunFam" id="3.40.50.12470:FF:000009">
    <property type="entry name" value="2-oxoglutarate dehydrogenase E1 component"/>
    <property type="match status" value="1"/>
</dbReference>
<dbReference type="Gene3D" id="3.40.50.12470">
    <property type="match status" value="1"/>
</dbReference>
<dbReference type="Gene3D" id="3.40.50.970">
    <property type="match status" value="1"/>
</dbReference>
<dbReference type="Gene3D" id="3.40.50.11610">
    <property type="entry name" value="Multifunctional 2-oxoglutarate metabolism enzyme, C-terminal domain"/>
    <property type="match status" value="1"/>
</dbReference>
<dbReference type="Gene3D" id="1.10.287.1150">
    <property type="entry name" value="TPP helical domain"/>
    <property type="match status" value="1"/>
</dbReference>
<dbReference type="InterPro" id="IPR032106">
    <property type="entry name" value="2-oxogl_dehyd_N"/>
</dbReference>
<dbReference type="InterPro" id="IPR011603">
    <property type="entry name" value="2oxoglutarate_DH_E1"/>
</dbReference>
<dbReference type="InterPro" id="IPR001017">
    <property type="entry name" value="DH_E1"/>
</dbReference>
<dbReference type="InterPro" id="IPR042179">
    <property type="entry name" value="KGD_C_sf"/>
</dbReference>
<dbReference type="InterPro" id="IPR031717">
    <property type="entry name" value="ODO-1/KGD_C"/>
</dbReference>
<dbReference type="InterPro" id="IPR029061">
    <property type="entry name" value="THDP-binding"/>
</dbReference>
<dbReference type="InterPro" id="IPR005475">
    <property type="entry name" value="Transketolase-like_Pyr-bd"/>
</dbReference>
<dbReference type="NCBIfam" id="TIGR00239">
    <property type="entry name" value="2oxo_dh_E1"/>
    <property type="match status" value="1"/>
</dbReference>
<dbReference type="NCBIfam" id="NF006914">
    <property type="entry name" value="PRK09404.1"/>
    <property type="match status" value="1"/>
</dbReference>
<dbReference type="NCBIfam" id="NF008907">
    <property type="entry name" value="PRK12270.1"/>
    <property type="match status" value="1"/>
</dbReference>
<dbReference type="PANTHER" id="PTHR23152:SF4">
    <property type="entry name" value="2-OXOADIPATE DEHYDROGENASE COMPLEX COMPONENT E1"/>
    <property type="match status" value="1"/>
</dbReference>
<dbReference type="PANTHER" id="PTHR23152">
    <property type="entry name" value="2-OXOGLUTARATE DEHYDROGENASE"/>
    <property type="match status" value="1"/>
</dbReference>
<dbReference type="Pfam" id="PF16078">
    <property type="entry name" value="2-oxogl_dehyd_N"/>
    <property type="match status" value="1"/>
</dbReference>
<dbReference type="Pfam" id="PF00676">
    <property type="entry name" value="E1_dh"/>
    <property type="match status" value="1"/>
</dbReference>
<dbReference type="Pfam" id="PF16870">
    <property type="entry name" value="OxoGdeHyase_C"/>
    <property type="match status" value="1"/>
</dbReference>
<dbReference type="Pfam" id="PF02779">
    <property type="entry name" value="Transket_pyr"/>
    <property type="match status" value="1"/>
</dbReference>
<dbReference type="PIRSF" id="PIRSF000157">
    <property type="entry name" value="Oxoglu_dh_E1"/>
    <property type="match status" value="1"/>
</dbReference>
<dbReference type="SMART" id="SM00861">
    <property type="entry name" value="Transket_pyr"/>
    <property type="match status" value="1"/>
</dbReference>
<dbReference type="SUPFAM" id="SSF52518">
    <property type="entry name" value="Thiamin diphosphate-binding fold (THDP-binding)"/>
    <property type="match status" value="2"/>
</dbReference>